<protein>
    <recommendedName>
        <fullName evidence="1">Sec-independent protein translocase protein TatA</fullName>
    </recommendedName>
</protein>
<sequence length="94" mass="9982">MFGRLGAPEIILILVVIILLFGAKKLPDMARSLGKSARILKSEAKAMKSEGQESTPAGPPNTDEQPPAQRTIQAAPGDVTSSRPVSEPTDTTKR</sequence>
<organism>
    <name type="scientific">Streptomyces avermitilis (strain ATCC 31267 / DSM 46492 / JCM 5070 / NBRC 14893 / NCIMB 12804 / NRRL 8165 / MA-4680)</name>
    <dbReference type="NCBI Taxonomy" id="227882"/>
    <lineage>
        <taxon>Bacteria</taxon>
        <taxon>Bacillati</taxon>
        <taxon>Actinomycetota</taxon>
        <taxon>Actinomycetes</taxon>
        <taxon>Kitasatosporales</taxon>
        <taxon>Streptomycetaceae</taxon>
        <taxon>Streptomyces</taxon>
    </lineage>
</organism>
<name>TATA_STRAW</name>
<dbReference type="EMBL" id="BA000030">
    <property type="protein sequence ID" value="BAC74403.1"/>
    <property type="molecule type" value="Genomic_DNA"/>
</dbReference>
<dbReference type="RefSeq" id="WP_010988092.1">
    <property type="nucleotide sequence ID" value="NZ_JZJK01000082.1"/>
</dbReference>
<dbReference type="SMR" id="Q828H7"/>
<dbReference type="GeneID" id="41543762"/>
<dbReference type="KEGG" id="sma:SAVERM_6692"/>
<dbReference type="eggNOG" id="COG1826">
    <property type="taxonomic scope" value="Bacteria"/>
</dbReference>
<dbReference type="HOGENOM" id="CLU_086034_4_3_11"/>
<dbReference type="OrthoDB" id="5245163at2"/>
<dbReference type="Proteomes" id="UP000000428">
    <property type="component" value="Chromosome"/>
</dbReference>
<dbReference type="GO" id="GO:0033281">
    <property type="term" value="C:TAT protein transport complex"/>
    <property type="evidence" value="ECO:0007669"/>
    <property type="project" value="UniProtKB-UniRule"/>
</dbReference>
<dbReference type="GO" id="GO:0008320">
    <property type="term" value="F:protein transmembrane transporter activity"/>
    <property type="evidence" value="ECO:0007669"/>
    <property type="project" value="UniProtKB-UniRule"/>
</dbReference>
<dbReference type="GO" id="GO:0043953">
    <property type="term" value="P:protein transport by the Tat complex"/>
    <property type="evidence" value="ECO:0007669"/>
    <property type="project" value="UniProtKB-UniRule"/>
</dbReference>
<dbReference type="Gene3D" id="1.20.5.3310">
    <property type="match status" value="1"/>
</dbReference>
<dbReference type="HAMAP" id="MF_00236">
    <property type="entry name" value="TatA_E"/>
    <property type="match status" value="1"/>
</dbReference>
<dbReference type="InterPro" id="IPR003369">
    <property type="entry name" value="TatA/B/E"/>
</dbReference>
<dbReference type="InterPro" id="IPR006312">
    <property type="entry name" value="TatA/E"/>
</dbReference>
<dbReference type="NCBIfam" id="NF001854">
    <property type="entry name" value="PRK00575.1"/>
    <property type="match status" value="1"/>
</dbReference>
<dbReference type="NCBIfam" id="TIGR01411">
    <property type="entry name" value="tatAE"/>
    <property type="match status" value="1"/>
</dbReference>
<dbReference type="PANTHER" id="PTHR42982">
    <property type="entry name" value="SEC-INDEPENDENT PROTEIN TRANSLOCASE PROTEIN TATA"/>
    <property type="match status" value="1"/>
</dbReference>
<dbReference type="PANTHER" id="PTHR42982:SF8">
    <property type="entry name" value="SEC-INDEPENDENT PROTEIN TRANSLOCASE PROTEIN TATA"/>
    <property type="match status" value="1"/>
</dbReference>
<dbReference type="Pfam" id="PF02416">
    <property type="entry name" value="TatA_B_E"/>
    <property type="match status" value="1"/>
</dbReference>
<reference key="1">
    <citation type="journal article" date="2001" name="Proc. Natl. Acad. Sci. U.S.A.">
        <title>Genome sequence of an industrial microorganism Streptomyces avermitilis: deducing the ability of producing secondary metabolites.</title>
        <authorList>
            <person name="Omura S."/>
            <person name="Ikeda H."/>
            <person name="Ishikawa J."/>
            <person name="Hanamoto A."/>
            <person name="Takahashi C."/>
            <person name="Shinose M."/>
            <person name="Takahashi Y."/>
            <person name="Horikawa H."/>
            <person name="Nakazawa H."/>
            <person name="Osonoe T."/>
            <person name="Kikuchi H."/>
            <person name="Shiba T."/>
            <person name="Sakaki Y."/>
            <person name="Hattori M."/>
        </authorList>
    </citation>
    <scope>NUCLEOTIDE SEQUENCE [LARGE SCALE GENOMIC DNA]</scope>
    <source>
        <strain>ATCC 31267 / DSM 46492 / JCM 5070 / NBRC 14893 / NCIMB 12804 / NRRL 8165 / MA-4680</strain>
    </source>
</reference>
<reference key="2">
    <citation type="journal article" date="2003" name="Nat. Biotechnol.">
        <title>Complete genome sequence and comparative analysis of the industrial microorganism Streptomyces avermitilis.</title>
        <authorList>
            <person name="Ikeda H."/>
            <person name="Ishikawa J."/>
            <person name="Hanamoto A."/>
            <person name="Shinose M."/>
            <person name="Kikuchi H."/>
            <person name="Shiba T."/>
            <person name="Sakaki Y."/>
            <person name="Hattori M."/>
            <person name="Omura S."/>
        </authorList>
    </citation>
    <scope>NUCLEOTIDE SEQUENCE [LARGE SCALE GENOMIC DNA]</scope>
    <source>
        <strain>ATCC 31267 / DSM 46492 / JCM 5070 / NBRC 14893 / NCIMB 12804 / NRRL 8165 / MA-4680</strain>
    </source>
</reference>
<accession>Q828H7</accession>
<proteinExistence type="inferred from homology"/>
<comment type="function">
    <text evidence="1">Part of the twin-arginine translocation (Tat) system that transports large folded proteins containing a characteristic twin-arginine motif in their signal peptide across membranes. TatA could form the protein-conducting channel of the Tat system.</text>
</comment>
<comment type="subunit">
    <text evidence="1">The Tat system comprises two distinct complexes: a TatABC complex, containing multiple copies of TatA, TatB and TatC subunits, and a separate TatA complex, containing only TatA subunits. Substrates initially bind to the TatABC complex, which probably triggers association of the separate TatA complex to form the active translocon.</text>
</comment>
<comment type="subcellular location">
    <subcellularLocation>
        <location evidence="1">Cell membrane</location>
        <topology evidence="1">Single-pass membrane protein</topology>
    </subcellularLocation>
</comment>
<comment type="similarity">
    <text evidence="1">Belongs to the TatA/E family.</text>
</comment>
<gene>
    <name evidence="1" type="primary">tatA</name>
    <name type="synonym">sav6692</name>
    <name type="ordered locus">SAV_6692</name>
</gene>
<keyword id="KW-1003">Cell membrane</keyword>
<keyword id="KW-0472">Membrane</keyword>
<keyword id="KW-0653">Protein transport</keyword>
<keyword id="KW-1185">Reference proteome</keyword>
<keyword id="KW-0811">Translocation</keyword>
<keyword id="KW-0812">Transmembrane</keyword>
<keyword id="KW-1133">Transmembrane helix</keyword>
<keyword id="KW-0813">Transport</keyword>
<evidence type="ECO:0000255" key="1">
    <source>
        <dbReference type="HAMAP-Rule" id="MF_00236"/>
    </source>
</evidence>
<evidence type="ECO:0000256" key="2">
    <source>
        <dbReference type="SAM" id="MobiDB-lite"/>
    </source>
</evidence>
<feature type="chain" id="PRO_1000058968" description="Sec-independent protein translocase protein TatA">
    <location>
        <begin position="1"/>
        <end position="94"/>
    </location>
</feature>
<feature type="transmembrane region" description="Helical" evidence="1">
    <location>
        <begin position="1"/>
        <end position="21"/>
    </location>
</feature>
<feature type="region of interest" description="Disordered" evidence="2">
    <location>
        <begin position="44"/>
        <end position="94"/>
    </location>
</feature>
<feature type="compositionally biased region" description="Polar residues" evidence="2">
    <location>
        <begin position="62"/>
        <end position="72"/>
    </location>
</feature>